<protein>
    <recommendedName>
        <fullName evidence="4">Laccase</fullName>
        <ecNumber evidence="3">1.10.3.2</ecNumber>
    </recommendedName>
    <alternativeName>
        <fullName evidence="1">Benzenediol:oxygen oxidoreductase</fullName>
    </alternativeName>
    <alternativeName>
        <fullName evidence="1">Diphenol oxidase</fullName>
    </alternativeName>
    <alternativeName>
        <fullName evidence="1">Urishiol oxidase</fullName>
    </alternativeName>
</protein>
<feature type="chain" id="PRO_0000414619" description="Laccase">
    <location>
        <begin position="1"/>
        <end position="10" status="greater than"/>
    </location>
</feature>
<feature type="non-terminal residue" evidence="4">
    <location>
        <position position="10"/>
    </location>
</feature>
<evidence type="ECO:0000250" key="1">
    <source>
        <dbReference type="UniProtKB" id="D0VWU3"/>
    </source>
</evidence>
<evidence type="ECO:0000250" key="2">
    <source>
        <dbReference type="UniProtKB" id="Q70KY3"/>
    </source>
</evidence>
<evidence type="ECO:0000269" key="3">
    <source>
    </source>
</evidence>
<evidence type="ECO:0000303" key="4">
    <source>
    </source>
</evidence>
<evidence type="ECO:0000305" key="5"/>
<proteinExistence type="evidence at protein level"/>
<accession>B3A0L4</accession>
<comment type="function">
    <text evidence="3">Lignin degradation and detoxification of lignin-derived products. Has activity towards ABTS and, to a much lesser extent, towards N,N-dimethyl-1,4-phenylenediamine, catechol and 2-methylcatechol.</text>
</comment>
<comment type="catalytic activity">
    <reaction evidence="3">
        <text>4 hydroquinone + O2 = 4 benzosemiquinone + 2 H2O</text>
        <dbReference type="Rhea" id="RHEA:11276"/>
        <dbReference type="ChEBI" id="CHEBI:15377"/>
        <dbReference type="ChEBI" id="CHEBI:15379"/>
        <dbReference type="ChEBI" id="CHEBI:17594"/>
        <dbReference type="ChEBI" id="CHEBI:17977"/>
        <dbReference type="EC" id="1.10.3.2"/>
    </reaction>
</comment>
<comment type="cofactor">
    <cofactor evidence="2">
        <name>Cu cation</name>
        <dbReference type="ChEBI" id="CHEBI:23378"/>
    </cofactor>
    <text evidence="2">Binds 4 Cu cations per monomer.</text>
</comment>
<comment type="activity regulation">
    <text evidence="3">Strongly activated by Mg(2+) and Al(3+). At concentrations &lt;50 mM, activated by Ca(2+), Mn(2+), Co(2+) and K(+). Strongly inhibited by Hg(2+) and, in a concentration-dependent manner, by Fe(2+).</text>
</comment>
<comment type="biophysicochemical properties">
    <phDependence>
        <text evidence="3">Optimum pH is 2.2. Activity declines sharply with decreases or increases in pH and is absent above pH 6.6.</text>
    </phDependence>
    <temperatureDependence>
        <text evidence="3">Optimum temperature is 40 degrees Celsius. Retains 65% activity at 20 degrees Celsius and 24% activity at 100 degrees Celsius.</text>
    </temperatureDependence>
</comment>
<comment type="subcellular location">
    <subcellularLocation>
        <location evidence="1">Secreted</location>
    </subcellularLocation>
</comment>
<comment type="miscellaneous">
    <text evidence="3">Inhibits HIV-1 reverse transcriptase (IC(50)=0.6 uM).</text>
</comment>
<comment type="similarity">
    <text evidence="5">Belongs to the multicopper oxidase family.</text>
</comment>
<name>LAC1_HERCO</name>
<dbReference type="EC" id="1.10.3.2" evidence="3"/>
<dbReference type="BioCyc" id="MetaCyc:MONOMER-17210"/>
<dbReference type="GO" id="GO:0005576">
    <property type="term" value="C:extracellular region"/>
    <property type="evidence" value="ECO:0007669"/>
    <property type="project" value="UniProtKB-SubCell"/>
</dbReference>
<dbReference type="GO" id="GO:0052716">
    <property type="term" value="F:hydroquinone:oxygen oxidoreductase activity"/>
    <property type="evidence" value="ECO:0000314"/>
    <property type="project" value="UniProtKB"/>
</dbReference>
<dbReference type="GO" id="GO:0046872">
    <property type="term" value="F:metal ion binding"/>
    <property type="evidence" value="ECO:0007669"/>
    <property type="project" value="UniProtKB-KW"/>
</dbReference>
<dbReference type="GO" id="GO:0046274">
    <property type="term" value="P:lignin catabolic process"/>
    <property type="evidence" value="ECO:0000314"/>
    <property type="project" value="UniProtKB"/>
</dbReference>
<reference evidence="5" key="1">
    <citation type="journal article" date="2012" name="J. Microbiol.">
        <title>Purification and characterization of a novel laccase from the edible mushroom Hericium coralloides.</title>
        <authorList>
            <person name="Zou Y.J."/>
            <person name="Wang H.X."/>
            <person name="Ng T.B."/>
            <person name="Huang C.Y."/>
            <person name="Zhang J.X."/>
        </authorList>
    </citation>
    <scope>PROTEIN SEQUENCE</scope>
    <scope>FUNCTION</scope>
    <scope>CATALYTIC ACTIVITY</scope>
    <scope>ACTIVITY REGULATION</scope>
    <scope>BIOPHYSICOCHEMICAL PROPERTIES</scope>
    <source>
        <tissue evidence="3">Fruiting body</tissue>
    </source>
</reference>
<sequence length="10" mass="1078">AVGDDTPQLY</sequence>
<organism>
    <name type="scientific">Hericium coralloides</name>
    <name type="common">Coral tooth fungus</name>
    <name type="synonym">Hericium ramosum</name>
    <dbReference type="NCBI Taxonomy" id="100756"/>
    <lineage>
        <taxon>Eukaryota</taxon>
        <taxon>Fungi</taxon>
        <taxon>Dikarya</taxon>
        <taxon>Basidiomycota</taxon>
        <taxon>Agaricomycotina</taxon>
        <taxon>Agaricomycetes</taxon>
        <taxon>Russulales</taxon>
        <taxon>Hericiaceae</taxon>
        <taxon>Hericium</taxon>
    </lineage>
</organism>
<keyword id="KW-0186">Copper</keyword>
<keyword id="KW-0903">Direct protein sequencing</keyword>
<keyword id="KW-0439">Lignin degradation</keyword>
<keyword id="KW-0479">Metal-binding</keyword>
<keyword id="KW-0560">Oxidoreductase</keyword>
<keyword id="KW-0964">Secreted</keyword>